<feature type="chain" id="PRO_0000347412" description="Urease accessory protein UreG">
    <location>
        <begin position="1"/>
        <end position="211"/>
    </location>
</feature>
<feature type="binding site" evidence="1">
    <location>
        <begin position="11"/>
        <end position="18"/>
    </location>
    <ligand>
        <name>GTP</name>
        <dbReference type="ChEBI" id="CHEBI:37565"/>
    </ligand>
</feature>
<accession>Q7N4Y4</accession>
<keyword id="KW-0143">Chaperone</keyword>
<keyword id="KW-0963">Cytoplasm</keyword>
<keyword id="KW-0342">GTP-binding</keyword>
<keyword id="KW-0996">Nickel insertion</keyword>
<keyword id="KW-0547">Nucleotide-binding</keyword>
<keyword id="KW-1185">Reference proteome</keyword>
<organism>
    <name type="scientific">Photorhabdus laumondii subsp. laumondii (strain DSM 15139 / CIP 105565 / TT01)</name>
    <name type="common">Photorhabdus luminescens subsp. laumondii</name>
    <dbReference type="NCBI Taxonomy" id="243265"/>
    <lineage>
        <taxon>Bacteria</taxon>
        <taxon>Pseudomonadati</taxon>
        <taxon>Pseudomonadota</taxon>
        <taxon>Gammaproteobacteria</taxon>
        <taxon>Enterobacterales</taxon>
        <taxon>Morganellaceae</taxon>
        <taxon>Photorhabdus</taxon>
    </lineage>
</organism>
<evidence type="ECO:0000255" key="1">
    <source>
        <dbReference type="HAMAP-Rule" id="MF_01389"/>
    </source>
</evidence>
<protein>
    <recommendedName>
        <fullName evidence="1">Urease accessory protein UreG</fullName>
    </recommendedName>
</protein>
<sequence>MKKITRIGIGGPVGSGKTAVIEVITPILIQRGIKPLIITNDIVTTEDAKQVKRTLKGILDEEKILGVETGACPHTAVREDPSMNIAAVEEMEARFPDSDVVLIESGGDNLTLTFSPALADFYIYVIDVAEGEKIPRKNGPGLVQADILVINKIDLAPYVGASLAVMEHDTQVVRGQRPYILTNCKTGEGVETLVNMIMRDFLFTHSLQATQ</sequence>
<reference key="1">
    <citation type="journal article" date="2003" name="Nat. Biotechnol.">
        <title>The genome sequence of the entomopathogenic bacterium Photorhabdus luminescens.</title>
        <authorList>
            <person name="Duchaud E."/>
            <person name="Rusniok C."/>
            <person name="Frangeul L."/>
            <person name="Buchrieser C."/>
            <person name="Givaudan A."/>
            <person name="Taourit S."/>
            <person name="Bocs S."/>
            <person name="Boursaux-Eude C."/>
            <person name="Chandler M."/>
            <person name="Charles J.-F."/>
            <person name="Dassa E."/>
            <person name="Derose R."/>
            <person name="Derzelle S."/>
            <person name="Freyssinet G."/>
            <person name="Gaudriault S."/>
            <person name="Medigue C."/>
            <person name="Lanois A."/>
            <person name="Powell K."/>
            <person name="Siguier P."/>
            <person name="Vincent R."/>
            <person name="Wingate V."/>
            <person name="Zouine M."/>
            <person name="Glaser P."/>
            <person name="Boemare N."/>
            <person name="Danchin A."/>
            <person name="Kunst F."/>
        </authorList>
    </citation>
    <scope>NUCLEOTIDE SEQUENCE [LARGE SCALE GENOMIC DNA]</scope>
    <source>
        <strain>DSM 15139 / CIP 105565 / TT01</strain>
    </source>
</reference>
<comment type="function">
    <text evidence="1">Facilitates the functional incorporation of the urease nickel metallocenter. This process requires GTP hydrolysis, probably effectuated by UreG.</text>
</comment>
<comment type="subunit">
    <text evidence="1">Homodimer. UreD, UreF and UreG form a complex that acts as a GTP-hydrolysis-dependent molecular chaperone, activating the urease apoprotein by helping to assemble the nickel containing metallocenter of UreC. The UreE protein probably delivers the nickel.</text>
</comment>
<comment type="subcellular location">
    <subcellularLocation>
        <location evidence="1">Cytoplasm</location>
    </subcellularLocation>
</comment>
<comment type="similarity">
    <text evidence="1">Belongs to the SIMIBI class G3E GTPase family. UreG subfamily.</text>
</comment>
<dbReference type="EMBL" id="BX571866">
    <property type="protein sequence ID" value="CAE14469.1"/>
    <property type="molecule type" value="Genomic_DNA"/>
</dbReference>
<dbReference type="RefSeq" id="WP_011146430.1">
    <property type="nucleotide sequence ID" value="NC_005126.1"/>
</dbReference>
<dbReference type="SMR" id="Q7N4Y4"/>
<dbReference type="STRING" id="243265.plu2176"/>
<dbReference type="GeneID" id="88807041"/>
<dbReference type="KEGG" id="plu:plu2176"/>
<dbReference type="eggNOG" id="COG0378">
    <property type="taxonomic scope" value="Bacteria"/>
</dbReference>
<dbReference type="HOGENOM" id="CLU_072144_1_0_6"/>
<dbReference type="OrthoDB" id="9802035at2"/>
<dbReference type="Proteomes" id="UP000002514">
    <property type="component" value="Chromosome"/>
</dbReference>
<dbReference type="GO" id="GO:0005737">
    <property type="term" value="C:cytoplasm"/>
    <property type="evidence" value="ECO:0007669"/>
    <property type="project" value="UniProtKB-SubCell"/>
</dbReference>
<dbReference type="GO" id="GO:0005525">
    <property type="term" value="F:GTP binding"/>
    <property type="evidence" value="ECO:0007669"/>
    <property type="project" value="UniProtKB-KW"/>
</dbReference>
<dbReference type="GO" id="GO:0003924">
    <property type="term" value="F:GTPase activity"/>
    <property type="evidence" value="ECO:0007669"/>
    <property type="project" value="InterPro"/>
</dbReference>
<dbReference type="GO" id="GO:0016151">
    <property type="term" value="F:nickel cation binding"/>
    <property type="evidence" value="ECO:0007669"/>
    <property type="project" value="UniProtKB-UniRule"/>
</dbReference>
<dbReference type="GO" id="GO:0043419">
    <property type="term" value="P:urea catabolic process"/>
    <property type="evidence" value="ECO:0007669"/>
    <property type="project" value="InterPro"/>
</dbReference>
<dbReference type="Gene3D" id="3.40.50.300">
    <property type="entry name" value="P-loop containing nucleotide triphosphate hydrolases"/>
    <property type="match status" value="1"/>
</dbReference>
<dbReference type="HAMAP" id="MF_01389">
    <property type="entry name" value="UreG"/>
    <property type="match status" value="1"/>
</dbReference>
<dbReference type="InterPro" id="IPR003495">
    <property type="entry name" value="CobW/HypB/UreG_nucleotide-bd"/>
</dbReference>
<dbReference type="InterPro" id="IPR027417">
    <property type="entry name" value="P-loop_NTPase"/>
</dbReference>
<dbReference type="InterPro" id="IPR004400">
    <property type="entry name" value="UreG"/>
</dbReference>
<dbReference type="NCBIfam" id="TIGR00101">
    <property type="entry name" value="ureG"/>
    <property type="match status" value="1"/>
</dbReference>
<dbReference type="PANTHER" id="PTHR31715">
    <property type="entry name" value="UREASE ACCESSORY PROTEIN G"/>
    <property type="match status" value="1"/>
</dbReference>
<dbReference type="PANTHER" id="PTHR31715:SF0">
    <property type="entry name" value="UREASE ACCESSORY PROTEIN G"/>
    <property type="match status" value="1"/>
</dbReference>
<dbReference type="Pfam" id="PF02492">
    <property type="entry name" value="cobW"/>
    <property type="match status" value="1"/>
</dbReference>
<dbReference type="PIRSF" id="PIRSF005624">
    <property type="entry name" value="Ni-bind_GTPase"/>
    <property type="match status" value="1"/>
</dbReference>
<dbReference type="SUPFAM" id="SSF52540">
    <property type="entry name" value="P-loop containing nucleoside triphosphate hydrolases"/>
    <property type="match status" value="1"/>
</dbReference>
<proteinExistence type="inferred from homology"/>
<name>UREG_PHOLL</name>
<gene>
    <name evidence="1" type="primary">ureG</name>
    <name type="ordered locus">plu2176</name>
</gene>